<keyword id="KW-0044">Antibiotic</keyword>
<keyword id="KW-0929">Antimicrobial</keyword>
<keyword id="KW-0903">Direct protein sequencing</keyword>
<keyword id="KW-1015">Disulfide bond</keyword>
<keyword id="KW-0391">Immunity</keyword>
<keyword id="KW-0430">Lectin</keyword>
<keyword id="KW-0944">Nitration</keyword>
<keyword id="KW-1185">Reference proteome</keyword>
<keyword id="KW-0732">Signal</keyword>
<comment type="function">
    <text>MBP may play some important roles in the allergic reactions and inflammations, since MBP is capable of releasing histamine from mast cells and damaging the epithelial cells of bronchial tubes. Antiparasitic and antibiotic.</text>
</comment>
<comment type="subcellular location">
    <subcellularLocation>
        <location>Cytoplasmic granule</location>
    </subcellularLocation>
    <text>Matrix of eosinophil's large specific granule (crystalloid core).</text>
</comment>
<comment type="PTM">
    <text evidence="1">Nitrated.</text>
</comment>
<organism>
    <name type="scientific">Cavia porcellus</name>
    <name type="common">Guinea pig</name>
    <dbReference type="NCBI Taxonomy" id="10141"/>
    <lineage>
        <taxon>Eukaryota</taxon>
        <taxon>Metazoa</taxon>
        <taxon>Chordata</taxon>
        <taxon>Craniata</taxon>
        <taxon>Vertebrata</taxon>
        <taxon>Euteleostomi</taxon>
        <taxon>Mammalia</taxon>
        <taxon>Eutheria</taxon>
        <taxon>Euarchontoglires</taxon>
        <taxon>Glires</taxon>
        <taxon>Rodentia</taxon>
        <taxon>Hystricomorpha</taxon>
        <taxon>Caviidae</taxon>
        <taxon>Cavia</taxon>
    </lineage>
</organism>
<gene>
    <name type="primary">MBP1</name>
</gene>
<protein>
    <recommendedName>
        <fullName>Eosinophil granule major basic protein 1</fullName>
        <shortName>MBP-1</shortName>
    </recommendedName>
</protein>
<dbReference type="EMBL" id="D90251">
    <property type="protein sequence ID" value="BAA14291.1"/>
    <property type="molecule type" value="mRNA"/>
</dbReference>
<dbReference type="PIR" id="S13625">
    <property type="entry name" value="S13625"/>
</dbReference>
<dbReference type="RefSeq" id="NP_001166538.1">
    <property type="nucleotide sequence ID" value="NM_001173067.1"/>
</dbReference>
<dbReference type="SMR" id="P22032"/>
<dbReference type="FunCoup" id="P22032">
    <property type="interactions" value="102"/>
</dbReference>
<dbReference type="STRING" id="10141.ENSCPOP00000017638"/>
<dbReference type="MEROPS" id="I63.001"/>
<dbReference type="GeneID" id="100286788"/>
<dbReference type="KEGG" id="cpoc:100286788"/>
<dbReference type="CTD" id="100286788"/>
<dbReference type="eggNOG" id="KOG4297">
    <property type="taxonomic scope" value="Eukaryota"/>
</dbReference>
<dbReference type="InParanoid" id="P22032"/>
<dbReference type="OrthoDB" id="6369810at2759"/>
<dbReference type="Proteomes" id="UP000005447">
    <property type="component" value="Unassembled WGS sequence"/>
</dbReference>
<dbReference type="GO" id="GO:0030246">
    <property type="term" value="F:carbohydrate binding"/>
    <property type="evidence" value="ECO:0007669"/>
    <property type="project" value="UniProtKB-KW"/>
</dbReference>
<dbReference type="GO" id="GO:0042742">
    <property type="term" value="P:defense response to bacterium"/>
    <property type="evidence" value="ECO:0007669"/>
    <property type="project" value="UniProtKB-KW"/>
</dbReference>
<dbReference type="GO" id="GO:0006955">
    <property type="term" value="P:immune response"/>
    <property type="evidence" value="ECO:0007669"/>
    <property type="project" value="InterPro"/>
</dbReference>
<dbReference type="CDD" id="cd03598">
    <property type="entry name" value="CLECT_EMBP_like"/>
    <property type="match status" value="1"/>
</dbReference>
<dbReference type="Gene3D" id="3.10.100.10">
    <property type="entry name" value="Mannose-Binding Protein A, subunit A"/>
    <property type="match status" value="1"/>
</dbReference>
<dbReference type="InterPro" id="IPR001304">
    <property type="entry name" value="C-type_lectin-like"/>
</dbReference>
<dbReference type="InterPro" id="IPR016186">
    <property type="entry name" value="C-type_lectin-like/link_sf"/>
</dbReference>
<dbReference type="InterPro" id="IPR050111">
    <property type="entry name" value="C-type_lectin/snaclec_domain"/>
</dbReference>
<dbReference type="InterPro" id="IPR018378">
    <property type="entry name" value="C-type_lectin_CS"/>
</dbReference>
<dbReference type="InterPro" id="IPR016187">
    <property type="entry name" value="CTDL_fold"/>
</dbReference>
<dbReference type="InterPro" id="IPR033816">
    <property type="entry name" value="EMBP_CTLD"/>
</dbReference>
<dbReference type="InterPro" id="IPR002352">
    <property type="entry name" value="Eosinophil_major_basic"/>
</dbReference>
<dbReference type="PANTHER" id="PTHR22803">
    <property type="entry name" value="MANNOSE, PHOSPHOLIPASE, LECTIN RECEPTOR RELATED"/>
    <property type="match status" value="1"/>
</dbReference>
<dbReference type="Pfam" id="PF00059">
    <property type="entry name" value="Lectin_C"/>
    <property type="match status" value="1"/>
</dbReference>
<dbReference type="PRINTS" id="PR00770">
    <property type="entry name" value="EMAJORBASICP"/>
</dbReference>
<dbReference type="SMART" id="SM00034">
    <property type="entry name" value="CLECT"/>
    <property type="match status" value="1"/>
</dbReference>
<dbReference type="SUPFAM" id="SSF56436">
    <property type="entry name" value="C-type lectin-like"/>
    <property type="match status" value="1"/>
</dbReference>
<dbReference type="PROSITE" id="PS00615">
    <property type="entry name" value="C_TYPE_LECTIN_1"/>
    <property type="match status" value="1"/>
</dbReference>
<dbReference type="PROSITE" id="PS50041">
    <property type="entry name" value="C_TYPE_LECTIN_2"/>
    <property type="match status" value="1"/>
</dbReference>
<evidence type="ECO:0000250" key="1"/>
<evidence type="ECO:0000255" key="2"/>
<evidence type="ECO:0000255" key="3">
    <source>
        <dbReference type="PROSITE-ProRule" id="PRU00040"/>
    </source>
</evidence>
<evidence type="ECO:0000256" key="4">
    <source>
        <dbReference type="SAM" id="MobiDB-lite"/>
    </source>
</evidence>
<evidence type="ECO:0000269" key="5">
    <source>
    </source>
</evidence>
<feature type="signal peptide" evidence="2">
    <location>
        <begin position="1"/>
        <end position="15"/>
    </location>
</feature>
<feature type="propeptide" id="PRO_0000017379" description="Acidic" evidence="5">
    <location>
        <begin position="16"/>
        <end position="114"/>
    </location>
</feature>
<feature type="chain" id="PRO_0000017380" description="Eosinophil granule major basic protein 1">
    <location>
        <begin position="115"/>
        <end position="233"/>
    </location>
</feature>
<feature type="domain" description="C-type lectin" evidence="3">
    <location>
        <begin position="132"/>
        <end position="233"/>
    </location>
</feature>
<feature type="region of interest" description="Disordered" evidence="4">
    <location>
        <begin position="24"/>
        <end position="96"/>
    </location>
</feature>
<feature type="compositionally biased region" description="Low complexity" evidence="4">
    <location>
        <begin position="42"/>
        <end position="57"/>
    </location>
</feature>
<feature type="compositionally biased region" description="Acidic residues" evidence="4">
    <location>
        <begin position="58"/>
        <end position="93"/>
    </location>
</feature>
<feature type="disulfide bond" evidence="3">
    <location>
        <begin position="134"/>
        <end position="231"/>
    </location>
</feature>
<feature type="disulfide bond" evidence="3">
    <location>
        <begin position="208"/>
        <end position="223"/>
    </location>
</feature>
<name>EMBP1_CAVPO</name>
<proteinExistence type="evidence at protein level"/>
<accession>P22032</accession>
<reference key="1">
    <citation type="journal article" date="1991" name="FEBS Lett.">
        <title>Sequencing and cloning of the cDNA of guinea pig eosinophil major basic protein.</title>
        <authorList>
            <person name="Aoki I."/>
            <person name="Shindoh Y."/>
            <person name="Nishida T."/>
            <person name="Nakai S."/>
            <person name="Hong Y.-M."/>
            <person name="Mio M."/>
            <person name="Saito T."/>
            <person name="Tasaka K."/>
        </authorList>
    </citation>
    <scope>NUCLEOTIDE SEQUENCE [MRNA]</scope>
    <scope>PROTEIN SEQUENCE OF 115-162</scope>
    <source>
        <tissue>Eosinophil</tissue>
    </source>
</reference>
<reference key="2">
    <citation type="journal article" date="1993" name="Biochim. Biophys. Acta">
        <title>Purification of the antibacterial fragments of guinea-pig major basic protein.</title>
        <authorList>
            <person name="Hashimoto Y."/>
            <person name="Nagaoka I."/>
            <person name="Yamashita T."/>
        </authorList>
    </citation>
    <scope>PARTIAL PROTEIN SEQUENCE</scope>
</reference>
<sequence length="233" mass="26268">MKLLLLLALLLGAVSTRHLKVDTSSLQSLRGEESLAQDGETAEGATREATAGALMPLPEEEEMEGASGSEDDPEEEEEEEEEVEFSSELDVSPEDIQCPKEEDTVKFFSRPGYKTRGYVMVGSARTFNEAQWVCQRCYRGNLASIHSFAFNYQVQCTSAGLNVAQVWIGGQLRGKGRCRRFVWVDRTVWNFAYWARGQPWGGRQRGRCVTLCARGGHWRRSHCGKRRPFVCTY</sequence>